<evidence type="ECO:0000255" key="1">
    <source>
        <dbReference type="HAMAP-Rule" id="MF_00454"/>
    </source>
</evidence>
<gene>
    <name evidence="1" type="primary">fluC</name>
    <name evidence="1" type="synonym">crcB</name>
    <name type="ordered locus">Ccel_1873</name>
</gene>
<sequence>MKEMINVVAVGTGGFVGAASRYFISTLVNKLNTSGFPIATLIINILGSFLIGLLTQLLMSLCPDNKKLNLFLTTGILGGFTTFSTFSLETVNLFQGGKAVFGVVNIVLSIAFCLTGVVLGKMLAKTIASM</sequence>
<keyword id="KW-1003">Cell membrane</keyword>
<keyword id="KW-0407">Ion channel</keyword>
<keyword id="KW-0406">Ion transport</keyword>
<keyword id="KW-0472">Membrane</keyword>
<keyword id="KW-0479">Metal-binding</keyword>
<keyword id="KW-1185">Reference proteome</keyword>
<keyword id="KW-0915">Sodium</keyword>
<keyword id="KW-0812">Transmembrane</keyword>
<keyword id="KW-1133">Transmembrane helix</keyword>
<keyword id="KW-0813">Transport</keyword>
<name>FLUC_RUMCH</name>
<feature type="chain" id="PRO_1000135318" description="Fluoride-specific ion channel FluC">
    <location>
        <begin position="1"/>
        <end position="130"/>
    </location>
</feature>
<feature type="transmembrane region" description="Helical" evidence="1">
    <location>
        <begin position="4"/>
        <end position="24"/>
    </location>
</feature>
<feature type="transmembrane region" description="Helical" evidence="1">
    <location>
        <begin position="35"/>
        <end position="55"/>
    </location>
</feature>
<feature type="transmembrane region" description="Helical" evidence="1">
    <location>
        <begin position="68"/>
        <end position="88"/>
    </location>
</feature>
<feature type="transmembrane region" description="Helical" evidence="1">
    <location>
        <begin position="99"/>
        <end position="119"/>
    </location>
</feature>
<feature type="binding site" evidence="1">
    <location>
        <position position="78"/>
    </location>
    <ligand>
        <name>Na(+)</name>
        <dbReference type="ChEBI" id="CHEBI:29101"/>
        <note>structural</note>
    </ligand>
</feature>
<feature type="binding site" evidence="1">
    <location>
        <position position="81"/>
    </location>
    <ligand>
        <name>Na(+)</name>
        <dbReference type="ChEBI" id="CHEBI:29101"/>
        <note>structural</note>
    </ligand>
</feature>
<comment type="function">
    <text evidence="1">Fluoride-specific ion channel. Important for reducing fluoride concentration in the cell, thus reducing its toxicity.</text>
</comment>
<comment type="catalytic activity">
    <reaction evidence="1">
        <text>fluoride(in) = fluoride(out)</text>
        <dbReference type="Rhea" id="RHEA:76159"/>
        <dbReference type="ChEBI" id="CHEBI:17051"/>
    </reaction>
    <physiologicalReaction direction="left-to-right" evidence="1">
        <dbReference type="Rhea" id="RHEA:76160"/>
    </physiologicalReaction>
</comment>
<comment type="activity regulation">
    <text evidence="1">Na(+) is not transported, but it plays an essential structural role and its presence is essential for fluoride channel function.</text>
</comment>
<comment type="subcellular location">
    <subcellularLocation>
        <location evidence="1">Cell membrane</location>
        <topology evidence="1">Multi-pass membrane protein</topology>
    </subcellularLocation>
</comment>
<comment type="similarity">
    <text evidence="1">Belongs to the fluoride channel Fluc/FEX (TC 1.A.43) family.</text>
</comment>
<organism>
    <name type="scientific">Ruminiclostridium cellulolyticum (strain ATCC 35319 / DSM 5812 / JCM 6584 / H10)</name>
    <name type="common">Clostridium cellulolyticum</name>
    <dbReference type="NCBI Taxonomy" id="394503"/>
    <lineage>
        <taxon>Bacteria</taxon>
        <taxon>Bacillati</taxon>
        <taxon>Bacillota</taxon>
        <taxon>Clostridia</taxon>
        <taxon>Eubacteriales</taxon>
        <taxon>Oscillospiraceae</taxon>
        <taxon>Ruminiclostridium</taxon>
    </lineage>
</organism>
<dbReference type="EMBL" id="CP001348">
    <property type="protein sequence ID" value="ACL76221.1"/>
    <property type="molecule type" value="Genomic_DNA"/>
</dbReference>
<dbReference type="RefSeq" id="WP_015925326.1">
    <property type="nucleotide sequence ID" value="NC_011898.1"/>
</dbReference>
<dbReference type="SMR" id="B8I378"/>
<dbReference type="STRING" id="394503.Ccel_1873"/>
<dbReference type="KEGG" id="cce:Ccel_1873"/>
<dbReference type="eggNOG" id="COG0239">
    <property type="taxonomic scope" value="Bacteria"/>
</dbReference>
<dbReference type="HOGENOM" id="CLU_114342_2_3_9"/>
<dbReference type="OrthoDB" id="9815830at2"/>
<dbReference type="Proteomes" id="UP000001349">
    <property type="component" value="Chromosome"/>
</dbReference>
<dbReference type="GO" id="GO:0005886">
    <property type="term" value="C:plasma membrane"/>
    <property type="evidence" value="ECO:0007669"/>
    <property type="project" value="UniProtKB-SubCell"/>
</dbReference>
<dbReference type="GO" id="GO:0062054">
    <property type="term" value="F:fluoride channel activity"/>
    <property type="evidence" value="ECO:0007669"/>
    <property type="project" value="UniProtKB-UniRule"/>
</dbReference>
<dbReference type="GO" id="GO:0046872">
    <property type="term" value="F:metal ion binding"/>
    <property type="evidence" value="ECO:0007669"/>
    <property type="project" value="UniProtKB-KW"/>
</dbReference>
<dbReference type="GO" id="GO:0140114">
    <property type="term" value="P:cellular detoxification of fluoride"/>
    <property type="evidence" value="ECO:0007669"/>
    <property type="project" value="UniProtKB-UniRule"/>
</dbReference>
<dbReference type="HAMAP" id="MF_00454">
    <property type="entry name" value="FluC"/>
    <property type="match status" value="1"/>
</dbReference>
<dbReference type="InterPro" id="IPR003691">
    <property type="entry name" value="FluC"/>
</dbReference>
<dbReference type="NCBIfam" id="TIGR00494">
    <property type="entry name" value="crcB"/>
    <property type="match status" value="1"/>
</dbReference>
<dbReference type="PANTHER" id="PTHR28259">
    <property type="entry name" value="FLUORIDE EXPORT PROTEIN 1-RELATED"/>
    <property type="match status" value="1"/>
</dbReference>
<dbReference type="PANTHER" id="PTHR28259:SF1">
    <property type="entry name" value="FLUORIDE EXPORT PROTEIN 1-RELATED"/>
    <property type="match status" value="1"/>
</dbReference>
<dbReference type="Pfam" id="PF02537">
    <property type="entry name" value="CRCB"/>
    <property type="match status" value="1"/>
</dbReference>
<proteinExistence type="inferred from homology"/>
<accession>B8I378</accession>
<reference key="1">
    <citation type="submission" date="2009-01" db="EMBL/GenBank/DDBJ databases">
        <title>Complete sequence of Clostridium cellulolyticum H10.</title>
        <authorList>
            <consortium name="US DOE Joint Genome Institute"/>
            <person name="Lucas S."/>
            <person name="Copeland A."/>
            <person name="Lapidus A."/>
            <person name="Glavina del Rio T."/>
            <person name="Dalin E."/>
            <person name="Tice H."/>
            <person name="Bruce D."/>
            <person name="Goodwin L."/>
            <person name="Pitluck S."/>
            <person name="Chertkov O."/>
            <person name="Saunders E."/>
            <person name="Brettin T."/>
            <person name="Detter J.C."/>
            <person name="Han C."/>
            <person name="Larimer F."/>
            <person name="Land M."/>
            <person name="Hauser L."/>
            <person name="Kyrpides N."/>
            <person name="Ivanova N."/>
            <person name="Zhou J."/>
            <person name="Richardson P."/>
        </authorList>
    </citation>
    <scope>NUCLEOTIDE SEQUENCE [LARGE SCALE GENOMIC DNA]</scope>
    <source>
        <strain>ATCC 35319 / DSM 5812 / JCM 6584 / H10</strain>
    </source>
</reference>
<protein>
    <recommendedName>
        <fullName evidence="1">Fluoride-specific ion channel FluC</fullName>
    </recommendedName>
</protein>